<gene>
    <name type="ordered locus">At4g13200</name>
    <name type="ORF">F17N18.90</name>
</gene>
<reference key="1">
    <citation type="journal article" date="1999" name="Nature">
        <title>Sequence and analysis of chromosome 4 of the plant Arabidopsis thaliana.</title>
        <authorList>
            <person name="Mayer K.F.X."/>
            <person name="Schueller C."/>
            <person name="Wambutt R."/>
            <person name="Murphy G."/>
            <person name="Volckaert G."/>
            <person name="Pohl T."/>
            <person name="Duesterhoeft A."/>
            <person name="Stiekema W."/>
            <person name="Entian K.-D."/>
            <person name="Terryn N."/>
            <person name="Harris B."/>
            <person name="Ansorge W."/>
            <person name="Brandt P."/>
            <person name="Grivell L.A."/>
            <person name="Rieger M."/>
            <person name="Weichselgartner M."/>
            <person name="de Simone V."/>
            <person name="Obermaier B."/>
            <person name="Mache R."/>
            <person name="Mueller M."/>
            <person name="Kreis M."/>
            <person name="Delseny M."/>
            <person name="Puigdomenech P."/>
            <person name="Watson M."/>
            <person name="Schmidtheini T."/>
            <person name="Reichert B."/>
            <person name="Portetelle D."/>
            <person name="Perez-Alonso M."/>
            <person name="Boutry M."/>
            <person name="Bancroft I."/>
            <person name="Vos P."/>
            <person name="Hoheisel J."/>
            <person name="Zimmermann W."/>
            <person name="Wedler H."/>
            <person name="Ridley P."/>
            <person name="Langham S.-A."/>
            <person name="McCullagh B."/>
            <person name="Bilham L."/>
            <person name="Robben J."/>
            <person name="van der Schueren J."/>
            <person name="Grymonprez B."/>
            <person name="Chuang Y.-J."/>
            <person name="Vandenbussche F."/>
            <person name="Braeken M."/>
            <person name="Weltjens I."/>
            <person name="Voet M."/>
            <person name="Bastiaens I."/>
            <person name="Aert R."/>
            <person name="Defoor E."/>
            <person name="Weitzenegger T."/>
            <person name="Bothe G."/>
            <person name="Ramsperger U."/>
            <person name="Hilbert H."/>
            <person name="Braun M."/>
            <person name="Holzer E."/>
            <person name="Brandt A."/>
            <person name="Peters S."/>
            <person name="van Staveren M."/>
            <person name="Dirkse W."/>
            <person name="Mooijman P."/>
            <person name="Klein Lankhorst R."/>
            <person name="Rose M."/>
            <person name="Hauf J."/>
            <person name="Koetter P."/>
            <person name="Berneiser S."/>
            <person name="Hempel S."/>
            <person name="Feldpausch M."/>
            <person name="Lamberth S."/>
            <person name="Van den Daele H."/>
            <person name="De Keyser A."/>
            <person name="Buysshaert C."/>
            <person name="Gielen J."/>
            <person name="Villarroel R."/>
            <person name="De Clercq R."/>
            <person name="van Montagu M."/>
            <person name="Rogers J."/>
            <person name="Cronin A."/>
            <person name="Quail M.A."/>
            <person name="Bray-Allen S."/>
            <person name="Clark L."/>
            <person name="Doggett J."/>
            <person name="Hall S."/>
            <person name="Kay M."/>
            <person name="Lennard N."/>
            <person name="McLay K."/>
            <person name="Mayes R."/>
            <person name="Pettett A."/>
            <person name="Rajandream M.A."/>
            <person name="Lyne M."/>
            <person name="Benes V."/>
            <person name="Rechmann S."/>
            <person name="Borkova D."/>
            <person name="Bloecker H."/>
            <person name="Scharfe M."/>
            <person name="Grimm M."/>
            <person name="Loehnert T.-H."/>
            <person name="Dose S."/>
            <person name="de Haan M."/>
            <person name="Maarse A.C."/>
            <person name="Schaefer M."/>
            <person name="Mueller-Auer S."/>
            <person name="Gabel C."/>
            <person name="Fuchs M."/>
            <person name="Fartmann B."/>
            <person name="Granderath K."/>
            <person name="Dauner D."/>
            <person name="Herzl A."/>
            <person name="Neumann S."/>
            <person name="Argiriou A."/>
            <person name="Vitale D."/>
            <person name="Liguori R."/>
            <person name="Piravandi E."/>
            <person name="Massenet O."/>
            <person name="Quigley F."/>
            <person name="Clabauld G."/>
            <person name="Muendlein A."/>
            <person name="Felber R."/>
            <person name="Schnabl S."/>
            <person name="Hiller R."/>
            <person name="Schmidt W."/>
            <person name="Lecharny A."/>
            <person name="Aubourg S."/>
            <person name="Chefdor F."/>
            <person name="Cooke R."/>
            <person name="Berger C."/>
            <person name="Monfort A."/>
            <person name="Casacuberta E."/>
            <person name="Gibbons T."/>
            <person name="Weber N."/>
            <person name="Vandenbol M."/>
            <person name="Bargues M."/>
            <person name="Terol J."/>
            <person name="Torres A."/>
            <person name="Perez-Perez A."/>
            <person name="Purnelle B."/>
            <person name="Bent E."/>
            <person name="Johnson S."/>
            <person name="Tacon D."/>
            <person name="Jesse T."/>
            <person name="Heijnen L."/>
            <person name="Schwarz S."/>
            <person name="Scholler P."/>
            <person name="Heber S."/>
            <person name="Francs P."/>
            <person name="Bielke C."/>
            <person name="Frishman D."/>
            <person name="Haase D."/>
            <person name="Lemcke K."/>
            <person name="Mewes H.-W."/>
            <person name="Stocker S."/>
            <person name="Zaccaria P."/>
            <person name="Bevan M."/>
            <person name="Wilson R.K."/>
            <person name="de la Bastide M."/>
            <person name="Habermann K."/>
            <person name="Parnell L."/>
            <person name="Dedhia N."/>
            <person name="Gnoj L."/>
            <person name="Schutz K."/>
            <person name="Huang E."/>
            <person name="Spiegel L."/>
            <person name="Sekhon M."/>
            <person name="Murray J."/>
            <person name="Sheet P."/>
            <person name="Cordes M."/>
            <person name="Abu-Threideh J."/>
            <person name="Stoneking T."/>
            <person name="Kalicki J."/>
            <person name="Graves T."/>
            <person name="Harmon G."/>
            <person name="Edwards J."/>
            <person name="Latreille P."/>
            <person name="Courtney L."/>
            <person name="Cloud J."/>
            <person name="Abbott A."/>
            <person name="Scott K."/>
            <person name="Johnson D."/>
            <person name="Minx P."/>
            <person name="Bentley D."/>
            <person name="Fulton B."/>
            <person name="Miller N."/>
            <person name="Greco T."/>
            <person name="Kemp K."/>
            <person name="Kramer J."/>
            <person name="Fulton L."/>
            <person name="Mardis E."/>
            <person name="Dante M."/>
            <person name="Pepin K."/>
            <person name="Hillier L.W."/>
            <person name="Nelson J."/>
            <person name="Spieth J."/>
            <person name="Ryan E."/>
            <person name="Andrews S."/>
            <person name="Geisel C."/>
            <person name="Layman D."/>
            <person name="Du H."/>
            <person name="Ali J."/>
            <person name="Berghoff A."/>
            <person name="Jones K."/>
            <person name="Drone K."/>
            <person name="Cotton M."/>
            <person name="Joshu C."/>
            <person name="Antonoiu B."/>
            <person name="Zidanic M."/>
            <person name="Strong C."/>
            <person name="Sun H."/>
            <person name="Lamar B."/>
            <person name="Yordan C."/>
            <person name="Ma P."/>
            <person name="Zhong J."/>
            <person name="Preston R."/>
            <person name="Vil D."/>
            <person name="Shekher M."/>
            <person name="Matero A."/>
            <person name="Shah R."/>
            <person name="Swaby I.K."/>
            <person name="O'Shaughnessy A."/>
            <person name="Rodriguez M."/>
            <person name="Hoffman J."/>
            <person name="Till S."/>
            <person name="Granat S."/>
            <person name="Shohdy N."/>
            <person name="Hasegawa A."/>
            <person name="Hameed A."/>
            <person name="Lodhi M."/>
            <person name="Johnson A."/>
            <person name="Chen E."/>
            <person name="Marra M.A."/>
            <person name="Martienssen R."/>
            <person name="McCombie W.R."/>
        </authorList>
    </citation>
    <scope>NUCLEOTIDE SEQUENCE [LARGE SCALE GENOMIC DNA]</scope>
    <source>
        <strain>cv. Columbia</strain>
    </source>
</reference>
<reference key="2">
    <citation type="journal article" date="2017" name="Plant J.">
        <title>Araport11: a complete reannotation of the Arabidopsis thaliana reference genome.</title>
        <authorList>
            <person name="Cheng C.Y."/>
            <person name="Krishnakumar V."/>
            <person name="Chan A.P."/>
            <person name="Thibaud-Nissen F."/>
            <person name="Schobel S."/>
            <person name="Town C.D."/>
        </authorList>
    </citation>
    <scope>GENOME REANNOTATION</scope>
    <source>
        <strain>cv. Columbia</strain>
    </source>
</reference>
<reference key="3">
    <citation type="journal article" date="2003" name="Science">
        <title>Empirical analysis of transcriptional activity in the Arabidopsis genome.</title>
        <authorList>
            <person name="Yamada K."/>
            <person name="Lim J."/>
            <person name="Dale J.M."/>
            <person name="Chen H."/>
            <person name="Shinn P."/>
            <person name="Palm C.J."/>
            <person name="Southwick A.M."/>
            <person name="Wu H.C."/>
            <person name="Kim C.J."/>
            <person name="Nguyen M."/>
            <person name="Pham P.K."/>
            <person name="Cheuk R.F."/>
            <person name="Karlin-Newmann G."/>
            <person name="Liu S.X."/>
            <person name="Lam B."/>
            <person name="Sakano H."/>
            <person name="Wu T."/>
            <person name="Yu G."/>
            <person name="Miranda M."/>
            <person name="Quach H.L."/>
            <person name="Tripp M."/>
            <person name="Chang C.H."/>
            <person name="Lee J.M."/>
            <person name="Toriumi M.J."/>
            <person name="Chan M.M."/>
            <person name="Tang C.C."/>
            <person name="Onodera C.S."/>
            <person name="Deng J.M."/>
            <person name="Akiyama K."/>
            <person name="Ansari Y."/>
            <person name="Arakawa T."/>
            <person name="Banh J."/>
            <person name="Banno F."/>
            <person name="Bowser L."/>
            <person name="Brooks S.Y."/>
            <person name="Carninci P."/>
            <person name="Chao Q."/>
            <person name="Choy N."/>
            <person name="Enju A."/>
            <person name="Goldsmith A.D."/>
            <person name="Gurjal M."/>
            <person name="Hansen N.F."/>
            <person name="Hayashizaki Y."/>
            <person name="Johnson-Hopson C."/>
            <person name="Hsuan V.W."/>
            <person name="Iida K."/>
            <person name="Karnes M."/>
            <person name="Khan S."/>
            <person name="Koesema E."/>
            <person name="Ishida J."/>
            <person name="Jiang P.X."/>
            <person name="Jones T."/>
            <person name="Kawai J."/>
            <person name="Kamiya A."/>
            <person name="Meyers C."/>
            <person name="Nakajima M."/>
            <person name="Narusaka M."/>
            <person name="Seki M."/>
            <person name="Sakurai T."/>
            <person name="Satou M."/>
            <person name="Tamse R."/>
            <person name="Vaysberg M."/>
            <person name="Wallender E.K."/>
            <person name="Wong C."/>
            <person name="Yamamura Y."/>
            <person name="Yuan S."/>
            <person name="Shinozaki K."/>
            <person name="Davis R.W."/>
            <person name="Theologis A."/>
            <person name="Ecker J.R."/>
        </authorList>
    </citation>
    <scope>NUCLEOTIDE SEQUENCE [LARGE SCALE MRNA]</scope>
    <source>
        <strain>cv. Columbia</strain>
    </source>
</reference>
<reference key="4">
    <citation type="submission" date="2002-03" db="EMBL/GenBank/DDBJ databases">
        <title>Full-length cDNA from Arabidopsis thaliana.</title>
        <authorList>
            <person name="Brover V.V."/>
            <person name="Troukhan M.E."/>
            <person name="Alexandrov N.A."/>
            <person name="Lu Y.-P."/>
            <person name="Flavell R.B."/>
            <person name="Feldmann K.A."/>
        </authorList>
    </citation>
    <scope>NUCLEOTIDE SEQUENCE [LARGE SCALE MRNA]</scope>
</reference>
<reference key="5">
    <citation type="journal article" date="2006" name="Plant Physiol.">
        <title>Protein profiling of plastoglobules in chloroplasts and chromoplasts. A surprising site for differential accumulation of metabolic enzymes.</title>
        <authorList>
            <person name="Ytterberg A.J."/>
            <person name="Peltier J.-B."/>
            <person name="van Wijk K.J."/>
        </authorList>
    </citation>
    <scope>IDENTIFICATION BY MASS SPECTROMETRY</scope>
    <scope>SUBCELLULAR LOCATION [LARGE SCALE ANALYSIS]</scope>
    <source>
        <strain>cv. Columbia</strain>
    </source>
</reference>
<reference key="6">
    <citation type="journal article" date="2012" name="Plant Physiol.">
        <title>The functional network of the Arabidopsis plastoglobule proteome based on quantitative proteomics and genome-wide coexpression analysis.</title>
        <authorList>
            <person name="Lundquist P.K."/>
            <person name="Poliakov A."/>
            <person name="Bhuiyan N.H."/>
            <person name="Zybailov B."/>
            <person name="Sun Q."/>
            <person name="van Wijk K.J."/>
        </authorList>
    </citation>
    <scope>IDENTIFICATION BY MASS SPECTROMETRY</scope>
    <scope>SUBCELLULAR LOCATION [LARGE SCALE ANALYSIS]</scope>
    <source>
        <strain>cv. Columbia</strain>
    </source>
</reference>
<sequence>MSSFTIPSPSSFSLSNSYNQTSPHSFTLRNSRSNFEFHRLRLDVESRRRSTSLRSNCSTKGTDSGENENKSVLDAFFLGKALAEVINERIESTVGEVLSTIGKFQAEQQKQVQEIQEEVLERAKKAKERAARETMEEQGLVASKPVAITRNPDAVVVASVTSTSTVESKTIMVDVEESSSSSDED</sequence>
<protein>
    <recommendedName>
        <fullName>Uncharacterized protein At4g13200, chloroplastic</fullName>
    </recommendedName>
</protein>
<keyword id="KW-0150">Chloroplast</keyword>
<keyword id="KW-0175">Coiled coil</keyword>
<keyword id="KW-0934">Plastid</keyword>
<keyword id="KW-1185">Reference proteome</keyword>
<keyword id="KW-0809">Transit peptide</keyword>
<evidence type="ECO:0000255" key="1"/>
<evidence type="ECO:0000256" key="2">
    <source>
        <dbReference type="SAM" id="MobiDB-lite"/>
    </source>
</evidence>
<evidence type="ECO:0000269" key="3">
    <source>
    </source>
</evidence>
<evidence type="ECO:0000269" key="4">
    <source>
    </source>
</evidence>
<evidence type="ECO:0000305" key="5"/>
<name>Y4320_ARATH</name>
<feature type="transit peptide" description="Chloroplast" evidence="1">
    <location>
        <begin position="1"/>
        <end position="56"/>
    </location>
</feature>
<feature type="chain" id="PRO_0000286539" description="Uncharacterized protein At4g13200, chloroplastic">
    <location>
        <begin position="57"/>
        <end position="185"/>
    </location>
</feature>
<feature type="region of interest" description="Disordered" evidence="2">
    <location>
        <begin position="48"/>
        <end position="67"/>
    </location>
</feature>
<feature type="coiled-coil region" evidence="1">
    <location>
        <begin position="105"/>
        <end position="138"/>
    </location>
</feature>
<feature type="compositionally biased region" description="Polar residues" evidence="2">
    <location>
        <begin position="52"/>
        <end position="64"/>
    </location>
</feature>
<feature type="sequence conflict" description="In Ref. 4; AAM62995." evidence="5" ref="4">
    <original>T</original>
    <variation>I</variation>
    <location>
        <position position="27"/>
    </location>
</feature>
<feature type="sequence conflict" description="In Ref. 4; AAM62995." evidence="5" ref="4">
    <original>H</original>
    <variation>R</variation>
    <location>
        <position position="38"/>
    </location>
</feature>
<feature type="sequence conflict" description="In Ref. 4; AAM62995." evidence="5" ref="4">
    <original>S</original>
    <variation>Y</variation>
    <location>
        <position position="52"/>
    </location>
</feature>
<feature type="sequence conflict" description="In Ref. 4; AAM62995." evidence="5" ref="4">
    <original>V</original>
    <variation>F</variation>
    <location>
        <position position="155"/>
    </location>
</feature>
<feature type="sequence conflict" description="In Ref. 4; AAM62995." evidence="5" ref="4">
    <original>A</original>
    <variation>T</variation>
    <location>
        <position position="158"/>
    </location>
</feature>
<feature type="sequence conflict" description="In Ref. 4; AAM62995." evidence="5" ref="4">
    <original>S</original>
    <variation>P</variation>
    <location>
        <position position="162"/>
    </location>
</feature>
<proteinExistence type="evidence at protein level"/>
<comment type="subcellular location">
    <subcellularLocation>
        <location evidence="3 4">Plastid</location>
        <location evidence="3 4">Chloroplast</location>
        <location evidence="3 4">Plastoglobule</location>
    </subcellularLocation>
</comment>
<accession>Q8LDV3</accession>
<accession>Q9SVQ7</accession>
<dbReference type="EMBL" id="AL049751">
    <property type="protein sequence ID" value="CAB41930.1"/>
    <property type="molecule type" value="Genomic_DNA"/>
</dbReference>
<dbReference type="EMBL" id="AL161535">
    <property type="protein sequence ID" value="CAB78362.1"/>
    <property type="molecule type" value="Genomic_DNA"/>
</dbReference>
<dbReference type="EMBL" id="CP002687">
    <property type="protein sequence ID" value="AEE83244.1"/>
    <property type="molecule type" value="Genomic_DNA"/>
</dbReference>
<dbReference type="EMBL" id="AY117202">
    <property type="protein sequence ID" value="AAM51277.1"/>
    <property type="molecule type" value="mRNA"/>
</dbReference>
<dbReference type="EMBL" id="AY063801">
    <property type="protein sequence ID" value="AAL36157.1"/>
    <property type="molecule type" value="mRNA"/>
</dbReference>
<dbReference type="EMBL" id="AY085778">
    <property type="protein sequence ID" value="AAM62995.1"/>
    <property type="molecule type" value="mRNA"/>
</dbReference>
<dbReference type="PIR" id="T07700">
    <property type="entry name" value="T07700"/>
</dbReference>
<dbReference type="RefSeq" id="NP_193056.1">
    <property type="nucleotide sequence ID" value="NM_117390.5"/>
</dbReference>
<dbReference type="SMR" id="Q8LDV3"/>
<dbReference type="FunCoup" id="Q8LDV3">
    <property type="interactions" value="1456"/>
</dbReference>
<dbReference type="STRING" id="3702.Q8LDV3"/>
<dbReference type="iPTMnet" id="Q8LDV3"/>
<dbReference type="SwissPalm" id="Q8LDV3"/>
<dbReference type="PaxDb" id="3702-AT4G13200.1"/>
<dbReference type="ProteomicsDB" id="242997"/>
<dbReference type="EnsemblPlants" id="AT4G13200.1">
    <property type="protein sequence ID" value="AT4G13200.1"/>
    <property type="gene ID" value="AT4G13200"/>
</dbReference>
<dbReference type="GeneID" id="826935"/>
<dbReference type="Gramene" id="AT4G13200.1">
    <property type="protein sequence ID" value="AT4G13200.1"/>
    <property type="gene ID" value="AT4G13200"/>
</dbReference>
<dbReference type="KEGG" id="ath:AT4G13200"/>
<dbReference type="Araport" id="AT4G13200"/>
<dbReference type="TAIR" id="AT4G13200">
    <property type="gene designation" value="PG18"/>
</dbReference>
<dbReference type="eggNOG" id="ENOG502S46M">
    <property type="taxonomic scope" value="Eukaryota"/>
</dbReference>
<dbReference type="HOGENOM" id="CLU_112222_1_0_1"/>
<dbReference type="InParanoid" id="Q8LDV3"/>
<dbReference type="OMA" id="ICNCESK"/>
<dbReference type="PRO" id="PR:Q8LDV3"/>
<dbReference type="Proteomes" id="UP000006548">
    <property type="component" value="Chromosome 4"/>
</dbReference>
<dbReference type="ExpressionAtlas" id="Q8LDV3">
    <property type="expression patterns" value="baseline and differential"/>
</dbReference>
<dbReference type="GO" id="GO:0009507">
    <property type="term" value="C:chloroplast"/>
    <property type="evidence" value="ECO:0000314"/>
    <property type="project" value="TAIR"/>
</dbReference>
<dbReference type="GO" id="GO:0031969">
    <property type="term" value="C:chloroplast membrane"/>
    <property type="evidence" value="ECO:0007005"/>
    <property type="project" value="TAIR"/>
</dbReference>
<dbReference type="GO" id="GO:0009535">
    <property type="term" value="C:chloroplast thylakoid membrane"/>
    <property type="evidence" value="ECO:0000314"/>
    <property type="project" value="TAIR"/>
</dbReference>
<dbReference type="GO" id="GO:0005829">
    <property type="term" value="C:cytosol"/>
    <property type="evidence" value="ECO:0007005"/>
    <property type="project" value="TAIR"/>
</dbReference>
<dbReference type="GO" id="GO:0010287">
    <property type="term" value="C:plastoglobule"/>
    <property type="evidence" value="ECO:0007005"/>
    <property type="project" value="TAIR"/>
</dbReference>
<dbReference type="GO" id="GO:0009579">
    <property type="term" value="C:thylakoid"/>
    <property type="evidence" value="ECO:0007005"/>
    <property type="project" value="TAIR"/>
</dbReference>
<dbReference type="GO" id="GO:0010027">
    <property type="term" value="P:thylakoid membrane organization"/>
    <property type="evidence" value="ECO:0000315"/>
    <property type="project" value="TAIR"/>
</dbReference>
<dbReference type="InterPro" id="IPR040003">
    <property type="entry name" value="PG18-like"/>
</dbReference>
<dbReference type="PANTHER" id="PTHR35745">
    <property type="entry name" value="BNACNNG14650D PROTEIN"/>
    <property type="match status" value="1"/>
</dbReference>
<dbReference type="PANTHER" id="PTHR35745:SF1">
    <property type="entry name" value="OS04G0513000 PROTEIN"/>
    <property type="match status" value="1"/>
</dbReference>
<dbReference type="Pfam" id="PF20711">
    <property type="entry name" value="DUF6825"/>
    <property type="match status" value="1"/>
</dbReference>
<organism>
    <name type="scientific">Arabidopsis thaliana</name>
    <name type="common">Mouse-ear cress</name>
    <dbReference type="NCBI Taxonomy" id="3702"/>
    <lineage>
        <taxon>Eukaryota</taxon>
        <taxon>Viridiplantae</taxon>
        <taxon>Streptophyta</taxon>
        <taxon>Embryophyta</taxon>
        <taxon>Tracheophyta</taxon>
        <taxon>Spermatophyta</taxon>
        <taxon>Magnoliopsida</taxon>
        <taxon>eudicotyledons</taxon>
        <taxon>Gunneridae</taxon>
        <taxon>Pentapetalae</taxon>
        <taxon>rosids</taxon>
        <taxon>malvids</taxon>
        <taxon>Brassicales</taxon>
        <taxon>Brassicaceae</taxon>
        <taxon>Camelineae</taxon>
        <taxon>Arabidopsis</taxon>
    </lineage>
</organism>